<proteinExistence type="evidence at transcript level"/>
<accession>Q8BUP8</accession>
<accession>A4FTY9</accession>
<accession>Q8R231</accession>
<organism>
    <name type="scientific">Mus musculus</name>
    <name type="common">Mouse</name>
    <dbReference type="NCBI Taxonomy" id="10090"/>
    <lineage>
        <taxon>Eukaryota</taxon>
        <taxon>Metazoa</taxon>
        <taxon>Chordata</taxon>
        <taxon>Craniata</taxon>
        <taxon>Vertebrata</taxon>
        <taxon>Euteleostomi</taxon>
        <taxon>Mammalia</taxon>
        <taxon>Eutheria</taxon>
        <taxon>Euarchontoglires</taxon>
        <taxon>Glires</taxon>
        <taxon>Rodentia</taxon>
        <taxon>Myomorpha</taxon>
        <taxon>Muroidea</taxon>
        <taxon>Muridae</taxon>
        <taxon>Murinae</taxon>
        <taxon>Mus</taxon>
        <taxon>Mus</taxon>
    </lineage>
</organism>
<dbReference type="EMBL" id="AK083036">
    <property type="protein sequence ID" value="BAC38739.1"/>
    <property type="molecule type" value="mRNA"/>
</dbReference>
<dbReference type="EMBL" id="BC022623">
    <property type="protein sequence ID" value="AAH22623.1"/>
    <property type="molecule type" value="mRNA"/>
</dbReference>
<dbReference type="EMBL" id="BC099947">
    <property type="protein sequence ID" value="AAH99947.1"/>
    <property type="molecule type" value="mRNA"/>
</dbReference>
<dbReference type="EMBL" id="BC138882">
    <property type="protein sequence ID" value="AAI38883.1"/>
    <property type="molecule type" value="mRNA"/>
</dbReference>
<dbReference type="EMBL" id="BC138884">
    <property type="protein sequence ID" value="AAI38885.1"/>
    <property type="molecule type" value="mRNA"/>
</dbReference>
<dbReference type="CCDS" id="CCDS28103.1"/>
<dbReference type="RefSeq" id="NP_808300.1">
    <property type="nucleotide sequence ID" value="NM_177632.3"/>
</dbReference>
<dbReference type="SMR" id="Q8BUP8"/>
<dbReference type="FunCoup" id="Q8BUP8">
    <property type="interactions" value="11"/>
</dbReference>
<dbReference type="STRING" id="10090.ENSMUSP00000056555"/>
<dbReference type="PhosphoSitePlus" id="Q8BUP8"/>
<dbReference type="PaxDb" id="10090-ENSMUSP00000056555"/>
<dbReference type="ProteomicsDB" id="266822"/>
<dbReference type="Antibodypedia" id="68591">
    <property type="antibodies" value="33 antibodies from 10 providers"/>
</dbReference>
<dbReference type="DNASU" id="224093"/>
<dbReference type="Ensembl" id="ENSMUST00000059078.4">
    <property type="protein sequence ID" value="ENSMUSP00000056555.4"/>
    <property type="gene ID" value="ENSMUSG00000046546.4"/>
</dbReference>
<dbReference type="GeneID" id="224093"/>
<dbReference type="KEGG" id="mmu:224093"/>
<dbReference type="UCSC" id="uc007ywy.2">
    <property type="organism name" value="mouse"/>
</dbReference>
<dbReference type="AGR" id="MGI:2676309"/>
<dbReference type="CTD" id="131583"/>
<dbReference type="MGI" id="MGI:2676309">
    <property type="gene designation" value="Fam43a"/>
</dbReference>
<dbReference type="VEuPathDB" id="HostDB:ENSMUSG00000046546"/>
<dbReference type="eggNOG" id="KOG4448">
    <property type="taxonomic scope" value="Eukaryota"/>
</dbReference>
<dbReference type="GeneTree" id="ENSGT00940000161593"/>
<dbReference type="HOGENOM" id="CLU_056673_2_0_1"/>
<dbReference type="InParanoid" id="Q8BUP8"/>
<dbReference type="OMA" id="AMHLECG"/>
<dbReference type="OrthoDB" id="5962185at2759"/>
<dbReference type="PhylomeDB" id="Q8BUP8"/>
<dbReference type="TreeFam" id="TF314159"/>
<dbReference type="BioGRID-ORCS" id="224093">
    <property type="hits" value="1 hit in 77 CRISPR screens"/>
</dbReference>
<dbReference type="ChiTaRS" id="Fam43a">
    <property type="organism name" value="mouse"/>
</dbReference>
<dbReference type="PRO" id="PR:Q8BUP8"/>
<dbReference type="Proteomes" id="UP000000589">
    <property type="component" value="Chromosome 16"/>
</dbReference>
<dbReference type="RNAct" id="Q8BUP8">
    <property type="molecule type" value="protein"/>
</dbReference>
<dbReference type="Bgee" id="ENSMUSG00000046546">
    <property type="expression patterns" value="Expressed in vestibular membrane of cochlear duct and 203 other cell types or tissues"/>
</dbReference>
<dbReference type="CDD" id="cd01214">
    <property type="entry name" value="PTB_FAM43A"/>
    <property type="match status" value="1"/>
</dbReference>
<dbReference type="Gene3D" id="2.30.29.30">
    <property type="entry name" value="Pleckstrin-homology domain (PH domain)/Phosphotyrosine-binding domain (PTB)"/>
    <property type="match status" value="1"/>
</dbReference>
<dbReference type="InterPro" id="IPR051133">
    <property type="entry name" value="Adapter_Engulfment-Domain"/>
</dbReference>
<dbReference type="InterPro" id="IPR033930">
    <property type="entry name" value="FAM43A/B_PTB"/>
</dbReference>
<dbReference type="InterPro" id="IPR011993">
    <property type="entry name" value="PH-like_dom_sf"/>
</dbReference>
<dbReference type="InterPro" id="IPR006020">
    <property type="entry name" value="PTB/PI_dom"/>
</dbReference>
<dbReference type="PANTHER" id="PTHR11232">
    <property type="entry name" value="PHOSPHOTYROSINE INTERACTION DOMAIN-CONTAINING FAMILY MEMBER"/>
    <property type="match status" value="1"/>
</dbReference>
<dbReference type="PANTHER" id="PTHR11232:SF36">
    <property type="entry name" value="PROTEIN FAM43A"/>
    <property type="match status" value="1"/>
</dbReference>
<dbReference type="Pfam" id="PF14719">
    <property type="entry name" value="PID_2"/>
    <property type="match status" value="1"/>
</dbReference>
<dbReference type="SMART" id="SM00462">
    <property type="entry name" value="PTB"/>
    <property type="match status" value="1"/>
</dbReference>
<dbReference type="SUPFAM" id="SSF50729">
    <property type="entry name" value="PH domain-like"/>
    <property type="match status" value="1"/>
</dbReference>
<protein>
    <recommendedName>
        <fullName>Protein FAM43A</fullName>
    </recommendedName>
</protein>
<comment type="similarity">
    <text evidence="2">Belongs to the FAM43 family.</text>
</comment>
<reference key="1">
    <citation type="journal article" date="2005" name="Science">
        <title>The transcriptional landscape of the mammalian genome.</title>
        <authorList>
            <person name="Carninci P."/>
            <person name="Kasukawa T."/>
            <person name="Katayama S."/>
            <person name="Gough J."/>
            <person name="Frith M.C."/>
            <person name="Maeda N."/>
            <person name="Oyama R."/>
            <person name="Ravasi T."/>
            <person name="Lenhard B."/>
            <person name="Wells C."/>
            <person name="Kodzius R."/>
            <person name="Shimokawa K."/>
            <person name="Bajic V.B."/>
            <person name="Brenner S.E."/>
            <person name="Batalov S."/>
            <person name="Forrest A.R."/>
            <person name="Zavolan M."/>
            <person name="Davis M.J."/>
            <person name="Wilming L.G."/>
            <person name="Aidinis V."/>
            <person name="Allen J.E."/>
            <person name="Ambesi-Impiombato A."/>
            <person name="Apweiler R."/>
            <person name="Aturaliya R.N."/>
            <person name="Bailey T.L."/>
            <person name="Bansal M."/>
            <person name="Baxter L."/>
            <person name="Beisel K.W."/>
            <person name="Bersano T."/>
            <person name="Bono H."/>
            <person name="Chalk A.M."/>
            <person name="Chiu K.P."/>
            <person name="Choudhary V."/>
            <person name="Christoffels A."/>
            <person name="Clutterbuck D.R."/>
            <person name="Crowe M.L."/>
            <person name="Dalla E."/>
            <person name="Dalrymple B.P."/>
            <person name="de Bono B."/>
            <person name="Della Gatta G."/>
            <person name="di Bernardo D."/>
            <person name="Down T."/>
            <person name="Engstrom P."/>
            <person name="Fagiolini M."/>
            <person name="Faulkner G."/>
            <person name="Fletcher C.F."/>
            <person name="Fukushima T."/>
            <person name="Furuno M."/>
            <person name="Futaki S."/>
            <person name="Gariboldi M."/>
            <person name="Georgii-Hemming P."/>
            <person name="Gingeras T.R."/>
            <person name="Gojobori T."/>
            <person name="Green R.E."/>
            <person name="Gustincich S."/>
            <person name="Harbers M."/>
            <person name="Hayashi Y."/>
            <person name="Hensch T.K."/>
            <person name="Hirokawa N."/>
            <person name="Hill D."/>
            <person name="Huminiecki L."/>
            <person name="Iacono M."/>
            <person name="Ikeo K."/>
            <person name="Iwama A."/>
            <person name="Ishikawa T."/>
            <person name="Jakt M."/>
            <person name="Kanapin A."/>
            <person name="Katoh M."/>
            <person name="Kawasawa Y."/>
            <person name="Kelso J."/>
            <person name="Kitamura H."/>
            <person name="Kitano H."/>
            <person name="Kollias G."/>
            <person name="Krishnan S.P."/>
            <person name="Kruger A."/>
            <person name="Kummerfeld S.K."/>
            <person name="Kurochkin I.V."/>
            <person name="Lareau L.F."/>
            <person name="Lazarevic D."/>
            <person name="Lipovich L."/>
            <person name="Liu J."/>
            <person name="Liuni S."/>
            <person name="McWilliam S."/>
            <person name="Madan Babu M."/>
            <person name="Madera M."/>
            <person name="Marchionni L."/>
            <person name="Matsuda H."/>
            <person name="Matsuzawa S."/>
            <person name="Miki H."/>
            <person name="Mignone F."/>
            <person name="Miyake S."/>
            <person name="Morris K."/>
            <person name="Mottagui-Tabar S."/>
            <person name="Mulder N."/>
            <person name="Nakano N."/>
            <person name="Nakauchi H."/>
            <person name="Ng P."/>
            <person name="Nilsson R."/>
            <person name="Nishiguchi S."/>
            <person name="Nishikawa S."/>
            <person name="Nori F."/>
            <person name="Ohara O."/>
            <person name="Okazaki Y."/>
            <person name="Orlando V."/>
            <person name="Pang K.C."/>
            <person name="Pavan W.J."/>
            <person name="Pavesi G."/>
            <person name="Pesole G."/>
            <person name="Petrovsky N."/>
            <person name="Piazza S."/>
            <person name="Reed J."/>
            <person name="Reid J.F."/>
            <person name="Ring B.Z."/>
            <person name="Ringwald M."/>
            <person name="Rost B."/>
            <person name="Ruan Y."/>
            <person name="Salzberg S.L."/>
            <person name="Sandelin A."/>
            <person name="Schneider C."/>
            <person name="Schoenbach C."/>
            <person name="Sekiguchi K."/>
            <person name="Semple C.A."/>
            <person name="Seno S."/>
            <person name="Sessa L."/>
            <person name="Sheng Y."/>
            <person name="Shibata Y."/>
            <person name="Shimada H."/>
            <person name="Shimada K."/>
            <person name="Silva D."/>
            <person name="Sinclair B."/>
            <person name="Sperling S."/>
            <person name="Stupka E."/>
            <person name="Sugiura K."/>
            <person name="Sultana R."/>
            <person name="Takenaka Y."/>
            <person name="Taki K."/>
            <person name="Tammoja K."/>
            <person name="Tan S.L."/>
            <person name="Tang S."/>
            <person name="Taylor M.S."/>
            <person name="Tegner J."/>
            <person name="Teichmann S.A."/>
            <person name="Ueda H.R."/>
            <person name="van Nimwegen E."/>
            <person name="Verardo R."/>
            <person name="Wei C.L."/>
            <person name="Yagi K."/>
            <person name="Yamanishi H."/>
            <person name="Zabarovsky E."/>
            <person name="Zhu S."/>
            <person name="Zimmer A."/>
            <person name="Hide W."/>
            <person name="Bult C."/>
            <person name="Grimmond S.M."/>
            <person name="Teasdale R.D."/>
            <person name="Liu E.T."/>
            <person name="Brusic V."/>
            <person name="Quackenbush J."/>
            <person name="Wahlestedt C."/>
            <person name="Mattick J.S."/>
            <person name="Hume D.A."/>
            <person name="Kai C."/>
            <person name="Sasaki D."/>
            <person name="Tomaru Y."/>
            <person name="Fukuda S."/>
            <person name="Kanamori-Katayama M."/>
            <person name="Suzuki M."/>
            <person name="Aoki J."/>
            <person name="Arakawa T."/>
            <person name="Iida J."/>
            <person name="Imamura K."/>
            <person name="Itoh M."/>
            <person name="Kato T."/>
            <person name="Kawaji H."/>
            <person name="Kawagashira N."/>
            <person name="Kawashima T."/>
            <person name="Kojima M."/>
            <person name="Kondo S."/>
            <person name="Konno H."/>
            <person name="Nakano K."/>
            <person name="Ninomiya N."/>
            <person name="Nishio T."/>
            <person name="Okada M."/>
            <person name="Plessy C."/>
            <person name="Shibata K."/>
            <person name="Shiraki T."/>
            <person name="Suzuki S."/>
            <person name="Tagami M."/>
            <person name="Waki K."/>
            <person name="Watahiki A."/>
            <person name="Okamura-Oho Y."/>
            <person name="Suzuki H."/>
            <person name="Kawai J."/>
            <person name="Hayashizaki Y."/>
        </authorList>
    </citation>
    <scope>NUCLEOTIDE SEQUENCE [LARGE SCALE MRNA]</scope>
    <source>
        <strain>C57BL/6J</strain>
        <tissue>Spinal cord</tissue>
    </source>
</reference>
<reference key="2">
    <citation type="journal article" date="2004" name="Genome Res.">
        <title>The status, quality, and expansion of the NIH full-length cDNA project: the Mammalian Gene Collection (MGC).</title>
        <authorList>
            <consortium name="The MGC Project Team"/>
        </authorList>
    </citation>
    <scope>NUCLEOTIDE SEQUENCE [LARGE SCALE MRNA]</scope>
    <source>
        <strain>CD-1</strain>
        <strain>FVB/N</strain>
        <tissue>Brain</tissue>
        <tissue>Neural stem cell</tissue>
        <tissue>Salivary gland</tissue>
    </source>
</reference>
<name>FA43A_MOUSE</name>
<gene>
    <name type="primary">Fam43a</name>
</gene>
<sequence length="424" mass="46206">MLPWKKHKFELLAEAPPRQASKPKGYAVSLHYSALSSLARACPEGALSRVGSMFRSKRKKLHITSEDPTYTVLYLGNATTIQARGDGCTDLAVGKIWSKSEAGRQGTKMKLTVSAQGIRMVHAEERALRRPGHLYLLHRVTYCVADARLPKVFAWVYRHELKHKAVMLRCHAVLVSKPEKAQAMALLLYQTSANALAEFKRLKRRDDARHQQQELVGAHTIPLVPLRKLLLHGPCCYKPPVERSRSAPKLGSITEDLLGEQQEEELQEEEEEHLEDCLEEEEEEDGVGDGDPAEEEAEAQRALVVAMQLECEDLLDPLENGHEEALGDGGVSLGPSSGTSLPLSVCASDMKAQLSQLISDLGDLSFGNDVSTLETDLRVTRLLSGESTGSESSIEGGGLDATPVSPGNPSGPADSTSLDEPYSG</sequence>
<feature type="chain" id="PRO_0000187025" description="Protein FAM43A">
    <location>
        <begin position="1"/>
        <end position="424"/>
    </location>
</feature>
<feature type="region of interest" description="Disordered" evidence="1">
    <location>
        <begin position="261"/>
        <end position="299"/>
    </location>
</feature>
<feature type="region of interest" description="Disordered" evidence="1">
    <location>
        <begin position="382"/>
        <end position="424"/>
    </location>
</feature>
<feature type="compositionally biased region" description="Acidic residues" evidence="1">
    <location>
        <begin position="261"/>
        <end position="297"/>
    </location>
</feature>
<feature type="compositionally biased region" description="Low complexity" evidence="1">
    <location>
        <begin position="382"/>
        <end position="394"/>
    </location>
</feature>
<feature type="compositionally biased region" description="Polar residues" evidence="1">
    <location>
        <begin position="405"/>
        <end position="418"/>
    </location>
</feature>
<evidence type="ECO:0000256" key="1">
    <source>
        <dbReference type="SAM" id="MobiDB-lite"/>
    </source>
</evidence>
<evidence type="ECO:0000305" key="2"/>
<keyword id="KW-1185">Reference proteome</keyword>